<comment type="function">
    <text evidence="1">The UvrABC repair system catalyzes the recognition and processing of DNA lesions. UvrC both incises the 5' and 3' sides of the lesion. The N-terminal half is responsible for the 3' incision and the C-terminal half is responsible for the 5' incision.</text>
</comment>
<comment type="subunit">
    <text evidence="1">Interacts with UvrB in an incision complex.</text>
</comment>
<comment type="subcellular location">
    <subcellularLocation>
        <location evidence="1">Cytoplasm</location>
    </subcellularLocation>
</comment>
<comment type="similarity">
    <text evidence="1">Belongs to the UvrC family.</text>
</comment>
<evidence type="ECO:0000255" key="1">
    <source>
        <dbReference type="HAMAP-Rule" id="MF_00203"/>
    </source>
</evidence>
<protein>
    <recommendedName>
        <fullName evidence="1">UvrABC system protein C</fullName>
        <shortName evidence="1">Protein UvrC</shortName>
    </recommendedName>
    <alternativeName>
        <fullName evidence="1">Excinuclease ABC subunit C</fullName>
    </alternativeName>
</protein>
<accession>Q1J6U4</accession>
<organism>
    <name type="scientific">Streptococcus pyogenes serotype M4 (strain MGAS10750)</name>
    <dbReference type="NCBI Taxonomy" id="370554"/>
    <lineage>
        <taxon>Bacteria</taxon>
        <taxon>Bacillati</taxon>
        <taxon>Bacillota</taxon>
        <taxon>Bacilli</taxon>
        <taxon>Lactobacillales</taxon>
        <taxon>Streptococcaceae</taxon>
        <taxon>Streptococcus</taxon>
    </lineage>
</organism>
<gene>
    <name evidence="1" type="primary">uvrC</name>
    <name type="ordered locus">MGAS10750_Spy0939</name>
</gene>
<sequence>MNELIKHKLELLPDSPGCYLHKDKEGTIIYVGKAKNLKKRVRSYFRGSHDTKTELLVSEIVDFEYIVTESDTEALLLEINLIQKNMPKYNIKLKDDKSYPFLKITNESFPRLVITRYIKKNDGLYFGPYPDSYTANEVKKLLDRIFPFKKCKNPINKVCFYYHLGQCCAHTICHTDKAYWDRLIDDVKHFLNGKDDKIIEDLRSKMLAASEEMAFERAAEYRDLISGIATMRTKQRVMSKDLQDRDIFGYYVDKGWMCVQVFFVRQGKLIQRDVNLFPYYNDAEEDFLTYMGQFYQDKQHFIPKEVFIPEAIDEELVAAIVPTKIIKPKRGEKKQLVALATKNARVSLQQKFDLLEKDIKKTSGAIENLGQLLRIDKPVRIEAFDNSNIQGTSPVAAMVVFVDGKPSKKDYRKFKIKTVVGPDDYASMREVLFRRYSRVKKEGLQAPNLIIVDGGVGQVNVAKDVIEKQLGLTIPVAGLQKNDKHQTHDLLFGNPLEVVPLPRRSEEFFLLHRIQDEVHRFAVTFHRQVRRKNSFSSTLDHISGLGPKRKQLLLRHFKTITAIASATSEEIQALGIPKTVVEAIQQQITDNKNDRSSP</sequence>
<keyword id="KW-0963">Cytoplasm</keyword>
<keyword id="KW-0227">DNA damage</keyword>
<keyword id="KW-0228">DNA excision</keyword>
<keyword id="KW-0234">DNA repair</keyword>
<keyword id="KW-0267">Excision nuclease</keyword>
<keyword id="KW-0742">SOS response</keyword>
<feature type="chain" id="PRO_0000264961" description="UvrABC system protein C">
    <location>
        <begin position="1"/>
        <end position="598"/>
    </location>
</feature>
<feature type="domain" description="GIY-YIG" evidence="1">
    <location>
        <begin position="14"/>
        <end position="91"/>
    </location>
</feature>
<feature type="domain" description="UVR" evidence="1">
    <location>
        <begin position="196"/>
        <end position="231"/>
    </location>
</feature>
<reference key="1">
    <citation type="journal article" date="2006" name="Proc. Natl. Acad. Sci. U.S.A.">
        <title>Molecular genetic anatomy of inter- and intraserotype variation in the human bacterial pathogen group A Streptococcus.</title>
        <authorList>
            <person name="Beres S.B."/>
            <person name="Richter E.W."/>
            <person name="Nagiec M.J."/>
            <person name="Sumby P."/>
            <person name="Porcella S.F."/>
            <person name="DeLeo F.R."/>
            <person name="Musser J.M."/>
        </authorList>
    </citation>
    <scope>NUCLEOTIDE SEQUENCE [LARGE SCALE GENOMIC DNA]</scope>
    <source>
        <strain>MGAS10750</strain>
    </source>
</reference>
<name>UVRC_STRPF</name>
<proteinExistence type="inferred from homology"/>
<dbReference type="EMBL" id="CP000262">
    <property type="protein sequence ID" value="ABF37889.1"/>
    <property type="molecule type" value="Genomic_DNA"/>
</dbReference>
<dbReference type="SMR" id="Q1J6U4"/>
<dbReference type="KEGG" id="spi:MGAS10750_Spy0939"/>
<dbReference type="HOGENOM" id="CLU_014841_3_2_9"/>
<dbReference type="Proteomes" id="UP000002434">
    <property type="component" value="Chromosome"/>
</dbReference>
<dbReference type="GO" id="GO:0005737">
    <property type="term" value="C:cytoplasm"/>
    <property type="evidence" value="ECO:0007669"/>
    <property type="project" value="UniProtKB-SubCell"/>
</dbReference>
<dbReference type="GO" id="GO:0009380">
    <property type="term" value="C:excinuclease repair complex"/>
    <property type="evidence" value="ECO:0007669"/>
    <property type="project" value="InterPro"/>
</dbReference>
<dbReference type="GO" id="GO:0003677">
    <property type="term" value="F:DNA binding"/>
    <property type="evidence" value="ECO:0007669"/>
    <property type="project" value="UniProtKB-UniRule"/>
</dbReference>
<dbReference type="GO" id="GO:0009381">
    <property type="term" value="F:excinuclease ABC activity"/>
    <property type="evidence" value="ECO:0007669"/>
    <property type="project" value="UniProtKB-UniRule"/>
</dbReference>
<dbReference type="GO" id="GO:0006289">
    <property type="term" value="P:nucleotide-excision repair"/>
    <property type="evidence" value="ECO:0007669"/>
    <property type="project" value="UniProtKB-UniRule"/>
</dbReference>
<dbReference type="GO" id="GO:0009432">
    <property type="term" value="P:SOS response"/>
    <property type="evidence" value="ECO:0007669"/>
    <property type="project" value="UniProtKB-UniRule"/>
</dbReference>
<dbReference type="CDD" id="cd10434">
    <property type="entry name" value="GIY-YIG_UvrC_Cho"/>
    <property type="match status" value="1"/>
</dbReference>
<dbReference type="FunFam" id="3.30.420.340:FF:000002">
    <property type="entry name" value="UvrABC system protein C"/>
    <property type="match status" value="1"/>
</dbReference>
<dbReference type="FunFam" id="3.40.1440.10:FF:000001">
    <property type="entry name" value="UvrABC system protein C"/>
    <property type="match status" value="1"/>
</dbReference>
<dbReference type="Gene3D" id="1.10.150.20">
    <property type="entry name" value="5' to 3' exonuclease, C-terminal subdomain"/>
    <property type="match status" value="1"/>
</dbReference>
<dbReference type="Gene3D" id="3.40.1440.10">
    <property type="entry name" value="GIY-YIG endonuclease"/>
    <property type="match status" value="1"/>
</dbReference>
<dbReference type="Gene3D" id="4.10.860.10">
    <property type="entry name" value="UVR domain"/>
    <property type="match status" value="1"/>
</dbReference>
<dbReference type="Gene3D" id="3.30.420.340">
    <property type="entry name" value="UvrC, RNAse H endonuclease domain"/>
    <property type="match status" value="1"/>
</dbReference>
<dbReference type="HAMAP" id="MF_00203">
    <property type="entry name" value="UvrC"/>
    <property type="match status" value="1"/>
</dbReference>
<dbReference type="InterPro" id="IPR000305">
    <property type="entry name" value="GIY-YIG_endonuc"/>
</dbReference>
<dbReference type="InterPro" id="IPR035901">
    <property type="entry name" value="GIY-YIG_endonuc_sf"/>
</dbReference>
<dbReference type="InterPro" id="IPR047296">
    <property type="entry name" value="GIY-YIG_UvrC_Cho"/>
</dbReference>
<dbReference type="InterPro" id="IPR010994">
    <property type="entry name" value="RuvA_2-like"/>
</dbReference>
<dbReference type="InterPro" id="IPR001943">
    <property type="entry name" value="UVR_dom"/>
</dbReference>
<dbReference type="InterPro" id="IPR036876">
    <property type="entry name" value="UVR_dom_sf"/>
</dbReference>
<dbReference type="InterPro" id="IPR050066">
    <property type="entry name" value="UvrABC_protein_C"/>
</dbReference>
<dbReference type="InterPro" id="IPR004791">
    <property type="entry name" value="UvrC"/>
</dbReference>
<dbReference type="InterPro" id="IPR001162">
    <property type="entry name" value="UvrC_RNase_H_dom"/>
</dbReference>
<dbReference type="InterPro" id="IPR038476">
    <property type="entry name" value="UvrC_RNase_H_dom_sf"/>
</dbReference>
<dbReference type="NCBIfam" id="TIGR00194">
    <property type="entry name" value="uvrC"/>
    <property type="match status" value="1"/>
</dbReference>
<dbReference type="PANTHER" id="PTHR30562:SF1">
    <property type="entry name" value="UVRABC SYSTEM PROTEIN C"/>
    <property type="match status" value="1"/>
</dbReference>
<dbReference type="PANTHER" id="PTHR30562">
    <property type="entry name" value="UVRC/OXIDOREDUCTASE"/>
    <property type="match status" value="1"/>
</dbReference>
<dbReference type="Pfam" id="PF01541">
    <property type="entry name" value="GIY-YIG"/>
    <property type="match status" value="1"/>
</dbReference>
<dbReference type="Pfam" id="PF14520">
    <property type="entry name" value="HHH_5"/>
    <property type="match status" value="1"/>
</dbReference>
<dbReference type="Pfam" id="PF02151">
    <property type="entry name" value="UVR"/>
    <property type="match status" value="1"/>
</dbReference>
<dbReference type="Pfam" id="PF22920">
    <property type="entry name" value="UvrC_RNaseH"/>
    <property type="match status" value="1"/>
</dbReference>
<dbReference type="Pfam" id="PF08459">
    <property type="entry name" value="UvrC_RNaseH_dom"/>
    <property type="match status" value="1"/>
</dbReference>
<dbReference type="SMART" id="SM00465">
    <property type="entry name" value="GIYc"/>
    <property type="match status" value="1"/>
</dbReference>
<dbReference type="SUPFAM" id="SSF46600">
    <property type="entry name" value="C-terminal UvrC-binding domain of UvrB"/>
    <property type="match status" value="1"/>
</dbReference>
<dbReference type="SUPFAM" id="SSF82771">
    <property type="entry name" value="GIY-YIG endonuclease"/>
    <property type="match status" value="1"/>
</dbReference>
<dbReference type="SUPFAM" id="SSF47781">
    <property type="entry name" value="RuvA domain 2-like"/>
    <property type="match status" value="1"/>
</dbReference>
<dbReference type="PROSITE" id="PS50164">
    <property type="entry name" value="GIY_YIG"/>
    <property type="match status" value="1"/>
</dbReference>
<dbReference type="PROSITE" id="PS50151">
    <property type="entry name" value="UVR"/>
    <property type="match status" value="1"/>
</dbReference>
<dbReference type="PROSITE" id="PS50165">
    <property type="entry name" value="UVRC"/>
    <property type="match status" value="1"/>
</dbReference>